<accession>Q9VYV3</accession>
<accession>M9PGX2</accession>
<proteinExistence type="evidence at protein level"/>
<reference evidence="13" key="1">
    <citation type="journal article" date="2000" name="Science">
        <title>The genome sequence of Drosophila melanogaster.</title>
        <authorList>
            <person name="Adams M.D."/>
            <person name="Celniker S.E."/>
            <person name="Holt R.A."/>
            <person name="Evans C.A."/>
            <person name="Gocayne J.D."/>
            <person name="Amanatides P.G."/>
            <person name="Scherer S.E."/>
            <person name="Li P.W."/>
            <person name="Hoskins R.A."/>
            <person name="Galle R.F."/>
            <person name="George R.A."/>
            <person name="Lewis S.E."/>
            <person name="Richards S."/>
            <person name="Ashburner M."/>
            <person name="Henderson S.N."/>
            <person name="Sutton G.G."/>
            <person name="Wortman J.R."/>
            <person name="Yandell M.D."/>
            <person name="Zhang Q."/>
            <person name="Chen L.X."/>
            <person name="Brandon R.C."/>
            <person name="Rogers Y.-H.C."/>
            <person name="Blazej R.G."/>
            <person name="Champe M."/>
            <person name="Pfeiffer B.D."/>
            <person name="Wan K.H."/>
            <person name="Doyle C."/>
            <person name="Baxter E.G."/>
            <person name="Helt G."/>
            <person name="Nelson C.R."/>
            <person name="Miklos G.L.G."/>
            <person name="Abril J.F."/>
            <person name="Agbayani A."/>
            <person name="An H.-J."/>
            <person name="Andrews-Pfannkoch C."/>
            <person name="Baldwin D."/>
            <person name="Ballew R.M."/>
            <person name="Basu A."/>
            <person name="Baxendale J."/>
            <person name="Bayraktaroglu L."/>
            <person name="Beasley E.M."/>
            <person name="Beeson K.Y."/>
            <person name="Benos P.V."/>
            <person name="Berman B.P."/>
            <person name="Bhandari D."/>
            <person name="Bolshakov S."/>
            <person name="Borkova D."/>
            <person name="Botchan M.R."/>
            <person name="Bouck J."/>
            <person name="Brokstein P."/>
            <person name="Brottier P."/>
            <person name="Burtis K.C."/>
            <person name="Busam D.A."/>
            <person name="Butler H."/>
            <person name="Cadieu E."/>
            <person name="Center A."/>
            <person name="Chandra I."/>
            <person name="Cherry J.M."/>
            <person name="Cawley S."/>
            <person name="Dahlke C."/>
            <person name="Davenport L.B."/>
            <person name="Davies P."/>
            <person name="de Pablos B."/>
            <person name="Delcher A."/>
            <person name="Deng Z."/>
            <person name="Mays A.D."/>
            <person name="Dew I."/>
            <person name="Dietz S.M."/>
            <person name="Dodson K."/>
            <person name="Doup L.E."/>
            <person name="Downes M."/>
            <person name="Dugan-Rocha S."/>
            <person name="Dunkov B.C."/>
            <person name="Dunn P."/>
            <person name="Durbin K.J."/>
            <person name="Evangelista C.C."/>
            <person name="Ferraz C."/>
            <person name="Ferriera S."/>
            <person name="Fleischmann W."/>
            <person name="Fosler C."/>
            <person name="Gabrielian A.E."/>
            <person name="Garg N.S."/>
            <person name="Gelbart W.M."/>
            <person name="Glasser K."/>
            <person name="Glodek A."/>
            <person name="Gong F."/>
            <person name="Gorrell J.H."/>
            <person name="Gu Z."/>
            <person name="Guan P."/>
            <person name="Harris M."/>
            <person name="Harris N.L."/>
            <person name="Harvey D.A."/>
            <person name="Heiman T.J."/>
            <person name="Hernandez J.R."/>
            <person name="Houck J."/>
            <person name="Hostin D."/>
            <person name="Houston K.A."/>
            <person name="Howland T.J."/>
            <person name="Wei M.-H."/>
            <person name="Ibegwam C."/>
            <person name="Jalali M."/>
            <person name="Kalush F."/>
            <person name="Karpen G.H."/>
            <person name="Ke Z."/>
            <person name="Kennison J.A."/>
            <person name="Ketchum K.A."/>
            <person name="Kimmel B.E."/>
            <person name="Kodira C.D."/>
            <person name="Kraft C.L."/>
            <person name="Kravitz S."/>
            <person name="Kulp D."/>
            <person name="Lai Z."/>
            <person name="Lasko P."/>
            <person name="Lei Y."/>
            <person name="Levitsky A.A."/>
            <person name="Li J.H."/>
            <person name="Li Z."/>
            <person name="Liang Y."/>
            <person name="Lin X."/>
            <person name="Liu X."/>
            <person name="Mattei B."/>
            <person name="McIntosh T.C."/>
            <person name="McLeod M.P."/>
            <person name="McPherson D."/>
            <person name="Merkulov G."/>
            <person name="Milshina N.V."/>
            <person name="Mobarry C."/>
            <person name="Morris J."/>
            <person name="Moshrefi A."/>
            <person name="Mount S.M."/>
            <person name="Moy M."/>
            <person name="Murphy B."/>
            <person name="Murphy L."/>
            <person name="Muzny D.M."/>
            <person name="Nelson D.L."/>
            <person name="Nelson D.R."/>
            <person name="Nelson K.A."/>
            <person name="Nixon K."/>
            <person name="Nusskern D.R."/>
            <person name="Pacleb J.M."/>
            <person name="Palazzolo M."/>
            <person name="Pittman G.S."/>
            <person name="Pan S."/>
            <person name="Pollard J."/>
            <person name="Puri V."/>
            <person name="Reese M.G."/>
            <person name="Reinert K."/>
            <person name="Remington K."/>
            <person name="Saunders R.D.C."/>
            <person name="Scheeler F."/>
            <person name="Shen H."/>
            <person name="Shue B.C."/>
            <person name="Siden-Kiamos I."/>
            <person name="Simpson M."/>
            <person name="Skupski M.P."/>
            <person name="Smith T.J."/>
            <person name="Spier E."/>
            <person name="Spradling A.C."/>
            <person name="Stapleton M."/>
            <person name="Strong R."/>
            <person name="Sun E."/>
            <person name="Svirskas R."/>
            <person name="Tector C."/>
            <person name="Turner R."/>
            <person name="Venter E."/>
            <person name="Wang A.H."/>
            <person name="Wang X."/>
            <person name="Wang Z.-Y."/>
            <person name="Wassarman D.A."/>
            <person name="Weinstock G.M."/>
            <person name="Weissenbach J."/>
            <person name="Williams S.M."/>
            <person name="Woodage T."/>
            <person name="Worley K.C."/>
            <person name="Wu D."/>
            <person name="Yang S."/>
            <person name="Yao Q.A."/>
            <person name="Ye J."/>
            <person name="Yeh R.-F."/>
            <person name="Zaveri J.S."/>
            <person name="Zhan M."/>
            <person name="Zhang G."/>
            <person name="Zhao Q."/>
            <person name="Zheng L."/>
            <person name="Zheng X.H."/>
            <person name="Zhong F.N."/>
            <person name="Zhong W."/>
            <person name="Zhou X."/>
            <person name="Zhu S.C."/>
            <person name="Zhu X."/>
            <person name="Smith H.O."/>
            <person name="Gibbs R.A."/>
            <person name="Myers E.W."/>
            <person name="Rubin G.M."/>
            <person name="Venter J.C."/>
        </authorList>
    </citation>
    <scope>NUCLEOTIDE SEQUENCE [LARGE SCALE GENOMIC DNA]</scope>
    <source>
        <strain evidence="13">Berkeley</strain>
    </source>
</reference>
<reference evidence="13" key="2">
    <citation type="journal article" date="2002" name="Genome Biol.">
        <title>Annotation of the Drosophila melanogaster euchromatic genome: a systematic review.</title>
        <authorList>
            <person name="Misra S."/>
            <person name="Crosby M.A."/>
            <person name="Mungall C.J."/>
            <person name="Matthews B.B."/>
            <person name="Campbell K.S."/>
            <person name="Hradecky P."/>
            <person name="Huang Y."/>
            <person name="Kaminker J.S."/>
            <person name="Millburn G.H."/>
            <person name="Prochnik S.E."/>
            <person name="Smith C.D."/>
            <person name="Tupy J.L."/>
            <person name="Whitfield E.J."/>
            <person name="Bayraktaroglu L."/>
            <person name="Berman B.P."/>
            <person name="Bettencourt B.R."/>
            <person name="Celniker S.E."/>
            <person name="de Grey A.D.N.J."/>
            <person name="Drysdale R.A."/>
            <person name="Harris N.L."/>
            <person name="Richter J."/>
            <person name="Russo S."/>
            <person name="Schroeder A.J."/>
            <person name="Shu S.Q."/>
            <person name="Stapleton M."/>
            <person name="Yamada C."/>
            <person name="Ashburner M."/>
            <person name="Gelbart W.M."/>
            <person name="Rubin G.M."/>
            <person name="Lewis S.E."/>
        </authorList>
    </citation>
    <scope>GENOME REANNOTATION</scope>
    <source>
        <strain evidence="13">Berkeley</strain>
    </source>
</reference>
<reference evidence="11" key="3">
    <citation type="journal article" date="2002" name="Genome Biol.">
        <title>A Drosophila full-length cDNA resource.</title>
        <authorList>
            <person name="Stapleton M."/>
            <person name="Carlson J.W."/>
            <person name="Brokstein P."/>
            <person name="Yu C."/>
            <person name="Champe M."/>
            <person name="George R.A."/>
            <person name="Guarin H."/>
            <person name="Kronmiller B."/>
            <person name="Pacleb J.M."/>
            <person name="Park S."/>
            <person name="Wan K.H."/>
            <person name="Rubin G.M."/>
            <person name="Celniker S.E."/>
        </authorList>
    </citation>
    <scope>NUCLEOTIDE SEQUENCE [LARGE SCALE MRNA] (ISOFORM A)</scope>
    <source>
        <strain evidence="11">Berkeley</strain>
        <tissue evidence="11">Embryo</tissue>
    </source>
</reference>
<reference evidence="10" key="4">
    <citation type="journal article" date="2009" name="EMBO J.">
        <title>Pretaporter, a Drosophila protein serving as a ligand for Draper in the phagocytosis of apoptotic cells.</title>
        <authorList>
            <person name="Kuraishi T."/>
            <person name="Nakagawa Y."/>
            <person name="Nagaosa K."/>
            <person name="Hashimoto Y."/>
            <person name="Ishimoto T."/>
            <person name="Moki T."/>
            <person name="Fujita Y."/>
            <person name="Nakayama H."/>
            <person name="Dohmae N."/>
            <person name="Shiratsuchi A."/>
            <person name="Yamamoto N."/>
            <person name="Ueda K."/>
            <person name="Yamaguchi M."/>
            <person name="Awasaki T."/>
            <person name="Nakanishi Y."/>
        </authorList>
    </citation>
    <scope>FUNCTION</scope>
    <scope>SUBCELLULAR LOCATION</scope>
    <scope>DEVELOPMENTAL STAGE</scope>
    <scope>DISRUPTION PHENOTYPE</scope>
    <scope>IDENTIFICATION BY MASS SPECTROMETRY</scope>
</reference>
<reference evidence="10" key="5">
    <citation type="journal article" date="2012" name="Drug Discov. Ther.">
        <title>Role of NPxY motif in Draper-mediated apoptotic cell clearance in Drosophila.</title>
        <authorList>
            <person name="Fujita Y."/>
            <person name="Nagaosa K."/>
            <person name="Shiratsuchi A."/>
            <person name="Nakanishi Y."/>
        </authorList>
    </citation>
    <scope>FUNCTION</scope>
</reference>
<reference evidence="10" key="6">
    <citation type="journal article" date="2012" name="J. Biol. Chem.">
        <title>Apoptosis-dependent externalization and involvement in apoptotic cell clearance of DmCaBP1, an endoplasmic reticulum protein of Drosophila.</title>
        <authorList>
            <person name="Okada R."/>
            <person name="Nagaosa K."/>
            <person name="Kuraishi T."/>
            <person name="Nakayama H."/>
            <person name="Yamamoto N."/>
            <person name="Nakagawa Y."/>
            <person name="Dohmae N."/>
            <person name="Shiratsuchi A."/>
            <person name="Nakanishi Y."/>
        </authorList>
    </citation>
    <scope>DISRUPTION PHENOTYPE</scope>
</reference>
<sequence>MLTRSILSVAVCGLLLSPLLPITRASQEEDTGKQDKQFTVELDPETFDTAIAGGNVFVKFFAPWCGHCKRIQPLWEQLAEIMNVDNPKVIIAKVDCTKHQGLCATHQVTGYPTLRLFKLGEEESVKFKGTRDLPAITDFINKELSAPAEADLGEVKREQVENLNIGKVVDLTEDTFAKHVSTGNHFVKFFAPWCSHCQRLAPTWEDLAKELIKEPTVTISKIDCTQFRSICQDFEVKGYPTLLWIEDGKKIEKYSGARDLSTLKTYVEKMVGVPLEKTAGEAGDEKVVIEEVAGEEDAAKKLTPQQLTGEDEFDQAIAEGVAFIKFYAPWCGHCQKLQPTWEQLATETHQAQSSVKIAKVDCTAPENKQVCIDQQVEGYPTLFLYKNGQRQNEYEGSRSLPELQAYLKKFLGHDEL</sequence>
<comment type="function">
    <text evidence="1 6 8">Possesses thioredoxin activity (By similarity). Acts as a ligand for Drpr and is required for the phagocytosis of apoptotic cells (PubMed:19927123, PubMed:23337816). Binds to the extracellular region of Drpr and augments Drpr tyrosine phosphorylation (PubMed:19927123, PubMed:23337816).</text>
</comment>
<comment type="interaction">
    <interactant intactId="EBI-125861">
        <id>Q9VYV3</id>
    </interactant>
    <interactant intactId="EBI-107028">
        <id>Q9W0A0</id>
        <label>drpr</label>
    </interactant>
    <organismsDiffer>false</organismsDiffer>
    <experiments>3</experiments>
</comment>
<comment type="subcellular location">
    <subcellularLocation>
        <location evidence="4 6">Endoplasmic reticulum</location>
    </subcellularLocation>
    <subcellularLocation>
        <location evidence="6">Cell surface</location>
    </subcellularLocation>
    <text evidence="6">Relocates from the endoplasmic reticulum to the cell surface during apoptosis.</text>
</comment>
<comment type="alternative products">
    <event type="alternative splicing"/>
    <isoform>
        <id>Q9VYV3-1</id>
        <name evidence="12">A</name>
        <name evidence="12">B</name>
        <name evidence="12">C</name>
        <sequence type="displayed"/>
    </isoform>
    <isoform>
        <id>Q9VYV3-2</id>
        <name evidence="12">D</name>
        <sequence type="described" ref="VSP_058568"/>
    </isoform>
</comment>
<comment type="developmental stage">
    <text evidence="6">Expressed in embryo, larva, pupa and adult (at protein level).</text>
</comment>
<comment type="disruption phenotype">
    <text evidence="6 7">Reduced level of apoptotic cell phagocytosis (PubMed:19927123). Loss of both Prtp and CaBP1 does not cause a further decrease in the reduced level of phagocytosis seen in either Prtp-lacking or CaBP1-lacking embryos (PubMed:22158613).</text>
</comment>
<comment type="similarity">
    <text evidence="2 5">Belongs to the protein disulfide isomerase family.</text>
</comment>
<feature type="signal peptide" evidence="2">
    <location>
        <begin position="1"/>
        <end position="25"/>
    </location>
</feature>
<feature type="chain" id="PRO_5007929564" description="Thioredoxin domain-containing protein 5 homolog">
    <location>
        <begin position="26"/>
        <end position="416"/>
    </location>
</feature>
<feature type="domain" description="Thioredoxin 1" evidence="3">
    <location>
        <begin position="26"/>
        <end position="145"/>
    </location>
</feature>
<feature type="domain" description="Thioredoxin 2" evidence="3">
    <location>
        <begin position="150"/>
        <end position="272"/>
    </location>
</feature>
<feature type="domain" description="Thioredoxin 3" evidence="3">
    <location>
        <begin position="293"/>
        <end position="412"/>
    </location>
</feature>
<feature type="short sequence motif" description="Prevents secretion from ER" evidence="4">
    <location>
        <begin position="413"/>
        <end position="416"/>
    </location>
</feature>
<feature type="disulfide bond" description="Redox-active" evidence="3">
    <location>
        <begin position="65"/>
        <end position="68"/>
    </location>
</feature>
<feature type="disulfide bond" description="Redox-active" evidence="3">
    <location>
        <begin position="194"/>
        <end position="197"/>
    </location>
</feature>
<feature type="disulfide bond" description="Redox-active" evidence="3">
    <location>
        <begin position="331"/>
        <end position="334"/>
    </location>
</feature>
<feature type="splice variant" id="VSP_058568" description="In isoform D." evidence="10">
    <original>MLTRSILSVAVCGLLLSPLLPITRASQEEDTGKQDKQFTVELDPETFDTAIAGGNVFVKFFAPW</original>
    <variation>M</variation>
    <location>
        <begin position="1"/>
        <end position="64"/>
    </location>
</feature>
<organism evidence="13">
    <name type="scientific">Drosophila melanogaster</name>
    <name type="common">Fruit fly</name>
    <dbReference type="NCBI Taxonomy" id="7227"/>
    <lineage>
        <taxon>Eukaryota</taxon>
        <taxon>Metazoa</taxon>
        <taxon>Ecdysozoa</taxon>
        <taxon>Arthropoda</taxon>
        <taxon>Hexapoda</taxon>
        <taxon>Insecta</taxon>
        <taxon>Pterygota</taxon>
        <taxon>Neoptera</taxon>
        <taxon>Endopterygota</taxon>
        <taxon>Diptera</taxon>
        <taxon>Brachycera</taxon>
        <taxon>Muscomorpha</taxon>
        <taxon>Ephydroidea</taxon>
        <taxon>Drosophilidae</taxon>
        <taxon>Drosophila</taxon>
        <taxon>Sophophora</taxon>
    </lineage>
</organism>
<protein>
    <recommendedName>
        <fullName evidence="10">Thioredoxin domain-containing protein 5 homolog</fullName>
    </recommendedName>
    <alternativeName>
        <fullName evidence="9">Protein pretaporter</fullName>
    </alternativeName>
</protein>
<name>TXND5_DROME</name>
<dbReference type="EMBL" id="AE014298">
    <property type="protein sequence ID" value="AAF48082.2"/>
    <property type="molecule type" value="Genomic_DNA"/>
</dbReference>
<dbReference type="EMBL" id="AE014298">
    <property type="protein sequence ID" value="ADV37665.1"/>
    <property type="molecule type" value="Genomic_DNA"/>
</dbReference>
<dbReference type="EMBL" id="AE014298">
    <property type="protein sequence ID" value="ADV37666.1"/>
    <property type="molecule type" value="Genomic_DNA"/>
</dbReference>
<dbReference type="EMBL" id="AE014298">
    <property type="protein sequence ID" value="AGB95303.1"/>
    <property type="molecule type" value="Genomic_DNA"/>
</dbReference>
<dbReference type="EMBL" id="AY051709">
    <property type="protein sequence ID" value="AAK93133.1"/>
    <property type="molecule type" value="mRNA"/>
</dbReference>
<dbReference type="RefSeq" id="NP_001188583.1">
    <molecule id="Q9VYV3-1"/>
    <property type="nucleotide sequence ID" value="NM_001201654.2"/>
</dbReference>
<dbReference type="RefSeq" id="NP_001188584.1">
    <molecule id="Q9VYV3-1"/>
    <property type="nucleotide sequence ID" value="NM_001201655.2"/>
</dbReference>
<dbReference type="RefSeq" id="NP_001259460.1">
    <molecule id="Q9VYV3-2"/>
    <property type="nucleotide sequence ID" value="NM_001272531.1"/>
</dbReference>
<dbReference type="RefSeq" id="NP_572742.1">
    <molecule id="Q9VYV3-1"/>
    <property type="nucleotide sequence ID" value="NM_132514.3"/>
</dbReference>
<dbReference type="SMR" id="Q9VYV3"/>
<dbReference type="FunCoup" id="Q9VYV3">
    <property type="interactions" value="1146"/>
</dbReference>
<dbReference type="IntAct" id="Q9VYV3">
    <property type="interactions" value="70"/>
</dbReference>
<dbReference type="MINT" id="Q9VYV3"/>
<dbReference type="STRING" id="7227.FBpp0073396"/>
<dbReference type="PaxDb" id="7227-FBpp0292397"/>
<dbReference type="DNASU" id="32124"/>
<dbReference type="EnsemblMetazoa" id="FBtr0073551">
    <molecule id="Q9VYV3-1"/>
    <property type="protein sequence ID" value="FBpp0073396"/>
    <property type="gene ID" value="FBgn0030329"/>
</dbReference>
<dbReference type="EnsemblMetazoa" id="FBtr0303334">
    <molecule id="Q9VYV3-1"/>
    <property type="protein sequence ID" value="FBpp0292397"/>
    <property type="gene ID" value="FBgn0030329"/>
</dbReference>
<dbReference type="EnsemblMetazoa" id="FBtr0303335">
    <molecule id="Q9VYV3-1"/>
    <property type="protein sequence ID" value="FBpp0292398"/>
    <property type="gene ID" value="FBgn0030329"/>
</dbReference>
<dbReference type="EnsemblMetazoa" id="FBtr0332954">
    <molecule id="Q9VYV3-2"/>
    <property type="protein sequence ID" value="FBpp0305170"/>
    <property type="gene ID" value="FBgn0030329"/>
</dbReference>
<dbReference type="GeneID" id="32124"/>
<dbReference type="KEGG" id="dme:Dmel_CG1837"/>
<dbReference type="UCSC" id="CG1837-RA">
    <molecule id="Q9VYV3-1"/>
    <property type="organism name" value="d. melanogaster"/>
</dbReference>
<dbReference type="AGR" id="FB:FBgn0030329"/>
<dbReference type="CTD" id="32124"/>
<dbReference type="FlyBase" id="FBgn0030329">
    <property type="gene designation" value="prtp"/>
</dbReference>
<dbReference type="VEuPathDB" id="VectorBase:FBgn0030329"/>
<dbReference type="eggNOG" id="KOG0191">
    <property type="taxonomic scope" value="Eukaryota"/>
</dbReference>
<dbReference type="GeneTree" id="ENSGT00940000156920"/>
<dbReference type="InParanoid" id="Q9VYV3"/>
<dbReference type="OMA" id="TKHQTLC"/>
<dbReference type="OrthoDB" id="71336at2759"/>
<dbReference type="PhylomeDB" id="Q9VYV3"/>
<dbReference type="Reactome" id="R-DME-432720">
    <property type="pathway name" value="Lysosome Vesicle Biogenesis"/>
</dbReference>
<dbReference type="Reactome" id="R-DME-6798695">
    <property type="pathway name" value="Neutrophil degranulation"/>
</dbReference>
<dbReference type="SignaLink" id="Q9VYV3"/>
<dbReference type="BioGRID-ORCS" id="32124">
    <property type="hits" value="0 hits in 1 CRISPR screen"/>
</dbReference>
<dbReference type="ChiTaRS" id="prtp">
    <property type="organism name" value="fly"/>
</dbReference>
<dbReference type="GenomeRNAi" id="32124"/>
<dbReference type="PRO" id="PR:Q9VYV3"/>
<dbReference type="Proteomes" id="UP000000803">
    <property type="component" value="Chromosome X"/>
</dbReference>
<dbReference type="Bgee" id="FBgn0030329">
    <property type="expression patterns" value="Expressed in thoracico-abdominal ganglion (Drosophila) and 185 other cell types or tissues"/>
</dbReference>
<dbReference type="ExpressionAtlas" id="Q9VYV3">
    <property type="expression patterns" value="baseline and differential"/>
</dbReference>
<dbReference type="GO" id="GO:0009986">
    <property type="term" value="C:cell surface"/>
    <property type="evidence" value="ECO:0007669"/>
    <property type="project" value="UniProtKB-SubCell"/>
</dbReference>
<dbReference type="GO" id="GO:0012505">
    <property type="term" value="C:endomembrane system"/>
    <property type="evidence" value="ECO:0007005"/>
    <property type="project" value="FlyBase"/>
</dbReference>
<dbReference type="GO" id="GO:0005783">
    <property type="term" value="C:endoplasmic reticulum"/>
    <property type="evidence" value="ECO:0000314"/>
    <property type="project" value="FlyBase"/>
</dbReference>
<dbReference type="GO" id="GO:0003756">
    <property type="term" value="F:protein disulfide isomerase activity"/>
    <property type="evidence" value="ECO:0000318"/>
    <property type="project" value="GO_Central"/>
</dbReference>
<dbReference type="GO" id="GO:0043277">
    <property type="term" value="P:apoptotic cell clearance"/>
    <property type="evidence" value="ECO:0000315"/>
    <property type="project" value="FlyBase"/>
</dbReference>
<dbReference type="GO" id="GO:2000427">
    <property type="term" value="P:positive regulation of apoptotic cell clearance"/>
    <property type="evidence" value="ECO:0000315"/>
    <property type="project" value="FlyBase"/>
</dbReference>
<dbReference type="GO" id="GO:0006457">
    <property type="term" value="P:protein folding"/>
    <property type="evidence" value="ECO:0000318"/>
    <property type="project" value="GO_Central"/>
</dbReference>
<dbReference type="CDD" id="cd03005">
    <property type="entry name" value="PDI_a_ERp46"/>
    <property type="match status" value="3"/>
</dbReference>
<dbReference type="FunFam" id="3.40.30.10:FF:000626">
    <property type="entry name" value="GM13104"/>
    <property type="match status" value="1"/>
</dbReference>
<dbReference type="FunFam" id="3.40.30.10:FF:000398">
    <property type="entry name" value="Thioredoxin domain-containing protein"/>
    <property type="match status" value="1"/>
</dbReference>
<dbReference type="FunFam" id="3.40.30.10:FF:000546">
    <property type="entry name" value="thioredoxin domain-containing protein 5"/>
    <property type="match status" value="1"/>
</dbReference>
<dbReference type="Gene3D" id="3.40.30.10">
    <property type="entry name" value="Glutaredoxin"/>
    <property type="match status" value="3"/>
</dbReference>
<dbReference type="InterPro" id="IPR051063">
    <property type="entry name" value="PDI"/>
</dbReference>
<dbReference type="InterPro" id="IPR005788">
    <property type="entry name" value="PDI_thioredoxin-like_dom"/>
</dbReference>
<dbReference type="InterPro" id="IPR036249">
    <property type="entry name" value="Thioredoxin-like_sf"/>
</dbReference>
<dbReference type="InterPro" id="IPR017937">
    <property type="entry name" value="Thioredoxin_CS"/>
</dbReference>
<dbReference type="InterPro" id="IPR013766">
    <property type="entry name" value="Thioredoxin_domain"/>
</dbReference>
<dbReference type="NCBIfam" id="TIGR01126">
    <property type="entry name" value="pdi_dom"/>
    <property type="match status" value="1"/>
</dbReference>
<dbReference type="PANTHER" id="PTHR45672">
    <property type="entry name" value="PROTEIN DISULFIDE-ISOMERASE C17H9.14C-RELATED"/>
    <property type="match status" value="1"/>
</dbReference>
<dbReference type="PANTHER" id="PTHR45672:SF3">
    <property type="entry name" value="THIOREDOXIN DOMAIN-CONTAINING PROTEIN 5"/>
    <property type="match status" value="1"/>
</dbReference>
<dbReference type="Pfam" id="PF00085">
    <property type="entry name" value="Thioredoxin"/>
    <property type="match status" value="3"/>
</dbReference>
<dbReference type="PRINTS" id="PR00421">
    <property type="entry name" value="THIOREDOXIN"/>
</dbReference>
<dbReference type="SUPFAM" id="SSF52833">
    <property type="entry name" value="Thioredoxin-like"/>
    <property type="match status" value="3"/>
</dbReference>
<dbReference type="PROSITE" id="PS00014">
    <property type="entry name" value="ER_TARGET"/>
    <property type="match status" value="1"/>
</dbReference>
<dbReference type="PROSITE" id="PS00194">
    <property type="entry name" value="THIOREDOXIN_1"/>
    <property type="match status" value="2"/>
</dbReference>
<dbReference type="PROSITE" id="PS51352">
    <property type="entry name" value="THIOREDOXIN_2"/>
    <property type="match status" value="3"/>
</dbReference>
<keyword id="KW-0025">Alternative splicing</keyword>
<keyword id="KW-1015">Disulfide bond</keyword>
<keyword id="KW-0256">Endoplasmic reticulum</keyword>
<keyword id="KW-0581">Phagocytosis</keyword>
<keyword id="KW-0676">Redox-active center</keyword>
<keyword id="KW-1185">Reference proteome</keyword>
<keyword id="KW-0677">Repeat</keyword>
<keyword id="KW-0732">Signal</keyword>
<evidence type="ECO:0000250" key="1">
    <source>
        <dbReference type="UniProtKB" id="Q91W90"/>
    </source>
</evidence>
<evidence type="ECO:0000255" key="2"/>
<evidence type="ECO:0000255" key="3">
    <source>
        <dbReference type="PROSITE-ProRule" id="PRU00691"/>
    </source>
</evidence>
<evidence type="ECO:0000255" key="4">
    <source>
        <dbReference type="PROSITE-ProRule" id="PRU10138"/>
    </source>
</evidence>
<evidence type="ECO:0000255" key="5">
    <source>
        <dbReference type="RuleBase" id="RU004208"/>
    </source>
</evidence>
<evidence type="ECO:0000269" key="6">
    <source>
    </source>
</evidence>
<evidence type="ECO:0000269" key="7">
    <source>
    </source>
</evidence>
<evidence type="ECO:0000269" key="8">
    <source>
    </source>
</evidence>
<evidence type="ECO:0000303" key="9">
    <source>
    </source>
</evidence>
<evidence type="ECO:0000305" key="10"/>
<evidence type="ECO:0000312" key="11">
    <source>
        <dbReference type="EMBL" id="AAK93133.1"/>
    </source>
</evidence>
<evidence type="ECO:0000312" key="12">
    <source>
        <dbReference type="FlyBase" id="FBgn0030329"/>
    </source>
</evidence>
<evidence type="ECO:0000312" key="13">
    <source>
        <dbReference type="Proteomes" id="UP000000803"/>
    </source>
</evidence>
<gene>
    <name evidence="12" type="primary">prtp</name>
    <name evidence="12" type="ORF">CG1837</name>
</gene>